<name>CBPB_ASTAS</name>
<feature type="chain" id="PRO_0000212783" description="Carboxypeptidase B">
    <location>
        <begin position="1"/>
        <end position="303"/>
    </location>
</feature>
<feature type="domain" description="Peptidase M14" evidence="2">
    <location>
        <begin position="5"/>
        <end position="298"/>
    </location>
</feature>
<feature type="active site" description="Proton donor/acceptor" evidence="2">
    <location>
        <position position="264"/>
    </location>
</feature>
<feature type="binding site" evidence="1">
    <location>
        <begin position="63"/>
        <end position="66"/>
    </location>
    <ligand>
        <name>substrate</name>
    </ligand>
</feature>
<feature type="binding site" evidence="2">
    <location>
        <position position="63"/>
    </location>
    <ligand>
        <name>Zn(2+)</name>
        <dbReference type="ChEBI" id="CHEBI:29105"/>
        <note>catalytic</note>
    </ligand>
</feature>
<feature type="binding site" evidence="2">
    <location>
        <position position="66"/>
    </location>
    <ligand>
        <name>Zn(2+)</name>
        <dbReference type="ChEBI" id="CHEBI:29105"/>
        <note>catalytic</note>
    </ligand>
</feature>
<feature type="binding site" evidence="1">
    <location>
        <position position="118"/>
    </location>
    <ligand>
        <name>substrate</name>
    </ligand>
</feature>
<feature type="binding site" evidence="1">
    <location>
        <begin position="136"/>
        <end position="137"/>
    </location>
    <ligand>
        <name>substrate</name>
    </ligand>
</feature>
<feature type="binding site" evidence="2">
    <location>
        <position position="189"/>
    </location>
    <ligand>
        <name>Zn(2+)</name>
        <dbReference type="ChEBI" id="CHEBI:29105"/>
        <note>catalytic</note>
    </ligand>
</feature>
<feature type="binding site" evidence="1">
    <location>
        <begin position="190"/>
        <end position="191"/>
    </location>
    <ligand>
        <name>substrate</name>
    </ligand>
</feature>
<feature type="binding site" evidence="1">
    <location>
        <position position="241"/>
    </location>
    <ligand>
        <name>substrate</name>
    </ligand>
</feature>
<proteinExistence type="evidence at protein level"/>
<accession>P04069</accession>
<protein>
    <recommendedName>
        <fullName>Carboxypeptidase B</fullName>
        <ecNumber>3.4.17.2</ecNumber>
    </recommendedName>
</protein>
<keyword id="KW-0121">Carboxypeptidase</keyword>
<keyword id="KW-0903">Direct protein sequencing</keyword>
<keyword id="KW-0378">Hydrolase</keyword>
<keyword id="KW-0479">Metal-binding</keyword>
<keyword id="KW-0482">Metalloprotease</keyword>
<keyword id="KW-0645">Protease</keyword>
<keyword id="KW-0964">Secreted</keyword>
<keyword id="KW-0862">Zinc</keyword>
<dbReference type="EC" id="3.4.17.2"/>
<dbReference type="PIR" id="A05141">
    <property type="entry name" value="CPCYB"/>
</dbReference>
<dbReference type="SMR" id="P04069"/>
<dbReference type="GO" id="GO:0005615">
    <property type="term" value="C:extracellular space"/>
    <property type="evidence" value="ECO:0007669"/>
    <property type="project" value="TreeGrafter"/>
</dbReference>
<dbReference type="GO" id="GO:0004181">
    <property type="term" value="F:metallocarboxypeptidase activity"/>
    <property type="evidence" value="ECO:0007669"/>
    <property type="project" value="UniProtKB-EC"/>
</dbReference>
<dbReference type="GO" id="GO:0008270">
    <property type="term" value="F:zinc ion binding"/>
    <property type="evidence" value="ECO:0007669"/>
    <property type="project" value="InterPro"/>
</dbReference>
<dbReference type="GO" id="GO:0006508">
    <property type="term" value="P:proteolysis"/>
    <property type="evidence" value="ECO:0007669"/>
    <property type="project" value="UniProtKB-KW"/>
</dbReference>
<dbReference type="CDD" id="cd03860">
    <property type="entry name" value="M14_CP_A-B_like"/>
    <property type="match status" value="1"/>
</dbReference>
<dbReference type="FunFam" id="3.40.630.10:FF:000001">
    <property type="entry name" value="Carboxypeptidase B"/>
    <property type="match status" value="1"/>
</dbReference>
<dbReference type="Gene3D" id="3.40.630.10">
    <property type="entry name" value="Zn peptidases"/>
    <property type="match status" value="1"/>
</dbReference>
<dbReference type="InterPro" id="IPR000834">
    <property type="entry name" value="Peptidase_M14"/>
</dbReference>
<dbReference type="PANTHER" id="PTHR11705:SF91">
    <property type="entry name" value="FI01817P-RELATED"/>
    <property type="match status" value="1"/>
</dbReference>
<dbReference type="PANTHER" id="PTHR11705">
    <property type="entry name" value="PROTEASE FAMILY M14 CARBOXYPEPTIDASE A,B"/>
    <property type="match status" value="1"/>
</dbReference>
<dbReference type="Pfam" id="PF00246">
    <property type="entry name" value="Peptidase_M14"/>
    <property type="match status" value="1"/>
</dbReference>
<dbReference type="PRINTS" id="PR00765">
    <property type="entry name" value="CRBOXYPTASEA"/>
</dbReference>
<dbReference type="SMART" id="SM00631">
    <property type="entry name" value="Zn_pept"/>
    <property type="match status" value="1"/>
</dbReference>
<dbReference type="SUPFAM" id="SSF53187">
    <property type="entry name" value="Zn-dependent exopeptidases"/>
    <property type="match status" value="1"/>
</dbReference>
<dbReference type="PROSITE" id="PS00132">
    <property type="entry name" value="CARBOXYPEPT_ZN_1"/>
    <property type="match status" value="1"/>
</dbReference>
<dbReference type="PROSITE" id="PS00133">
    <property type="entry name" value="CARBOXYPEPT_ZN_2"/>
    <property type="match status" value="1"/>
</dbReference>
<dbReference type="PROSITE" id="PS52035">
    <property type="entry name" value="PEPTIDASE_M14"/>
    <property type="match status" value="1"/>
</dbReference>
<sequence length="303" mass="33918">MDWTSYHDYDEINAWLDSLATDYPELASVEDVGLSYEGRTMKLLKLGKGGADKPIIFIDGGIHAREWIAPSTVTYIVNEFVSNSATYDDILSNVNFYVMPTINPDGYAYTFTDDRLWRKTRSETGSVLGCKGADPNRNWSFHWDEVGASDSPCSDIYAGPEPFSEVEMRNVRDQILEYAANIKVYLTFHSYSQLWMYPWGFTSDLPDDWQDLDTLATNAVDALTAVHGTRYEIGSSTNTIYAAAGGSDDWAKGEGGVKYAYTIELRDTGNYGFLLPENQIIPTGEETFEGVKVVANFVKDTYS</sequence>
<evidence type="ECO:0000250" key="1">
    <source>
        <dbReference type="UniProtKB" id="P00730"/>
    </source>
</evidence>
<evidence type="ECO:0000255" key="2">
    <source>
        <dbReference type="PROSITE-ProRule" id="PRU01379"/>
    </source>
</evidence>
<evidence type="ECO:0000305" key="3"/>
<organism>
    <name type="scientific">Astacus astacus</name>
    <name type="common">Noble crayfish</name>
    <name type="synonym">Astacus fluviatilis</name>
    <dbReference type="NCBI Taxonomy" id="6715"/>
    <lineage>
        <taxon>Eukaryota</taxon>
        <taxon>Metazoa</taxon>
        <taxon>Ecdysozoa</taxon>
        <taxon>Arthropoda</taxon>
        <taxon>Crustacea</taxon>
        <taxon>Multicrustacea</taxon>
        <taxon>Malacostraca</taxon>
        <taxon>Eumalacostraca</taxon>
        <taxon>Eucarida</taxon>
        <taxon>Decapoda</taxon>
        <taxon>Pleocyemata</taxon>
        <taxon>Astacidea</taxon>
        <taxon>Astacoidea</taxon>
        <taxon>Astacidae</taxon>
        <taxon>Astacus</taxon>
    </lineage>
</organism>
<comment type="catalytic activity">
    <reaction>
        <text>Preferential release of a C-terminal lysine or arginine amino acid.</text>
        <dbReference type="EC" id="3.4.17.2"/>
    </reaction>
</comment>
<comment type="cofactor">
    <cofactor evidence="1">
        <name>Zn(2+)</name>
        <dbReference type="ChEBI" id="CHEBI:29105"/>
    </cofactor>
    <text evidence="1">Binds 1 zinc ion per subunit.</text>
</comment>
<comment type="subcellular location">
    <subcellularLocation>
        <location>Secreted</location>
    </subcellularLocation>
</comment>
<comment type="similarity">
    <text evidence="3">Belongs to the peptidase M14 family.</text>
</comment>
<reference key="1">
    <citation type="journal article" date="1984" name="Biochemistry">
        <title>Amino acid sequence of crayfish (Astacus fluviatilis) carboxypeptidase B.</title>
        <authorList>
            <person name="Titani K."/>
            <person name="Ericsson L.H."/>
            <person name="Kumar S."/>
            <person name="Jakob F."/>
            <person name="Neurath H."/>
            <person name="Zwilling R."/>
        </authorList>
    </citation>
    <scope>PROTEIN SEQUENCE</scope>
</reference>